<gene>
    <name evidence="1" type="primary">plsX</name>
    <name type="ordered locus">SYNPCC7002_A0526</name>
</gene>
<dbReference type="EC" id="2.3.1.274" evidence="1"/>
<dbReference type="EMBL" id="CP000951">
    <property type="protein sequence ID" value="ACA98533.1"/>
    <property type="molecule type" value="Genomic_DNA"/>
</dbReference>
<dbReference type="SMR" id="B1XPH6"/>
<dbReference type="STRING" id="32049.SYNPCC7002_A0526"/>
<dbReference type="KEGG" id="syp:SYNPCC7002_A0526"/>
<dbReference type="eggNOG" id="COG0416">
    <property type="taxonomic scope" value="Bacteria"/>
</dbReference>
<dbReference type="HOGENOM" id="CLU_039379_1_1_3"/>
<dbReference type="UniPathway" id="UPA00085"/>
<dbReference type="Proteomes" id="UP000001688">
    <property type="component" value="Chromosome"/>
</dbReference>
<dbReference type="GO" id="GO:0005737">
    <property type="term" value="C:cytoplasm"/>
    <property type="evidence" value="ECO:0007669"/>
    <property type="project" value="UniProtKB-SubCell"/>
</dbReference>
<dbReference type="GO" id="GO:0043811">
    <property type="term" value="F:phosphate:acyl-[acyl carrier protein] acyltransferase activity"/>
    <property type="evidence" value="ECO:0007669"/>
    <property type="project" value="UniProtKB-UniRule"/>
</dbReference>
<dbReference type="GO" id="GO:0006633">
    <property type="term" value="P:fatty acid biosynthetic process"/>
    <property type="evidence" value="ECO:0007669"/>
    <property type="project" value="UniProtKB-UniRule"/>
</dbReference>
<dbReference type="GO" id="GO:0008654">
    <property type="term" value="P:phospholipid biosynthetic process"/>
    <property type="evidence" value="ECO:0007669"/>
    <property type="project" value="UniProtKB-KW"/>
</dbReference>
<dbReference type="Gene3D" id="3.40.718.10">
    <property type="entry name" value="Isopropylmalate Dehydrogenase"/>
    <property type="match status" value="1"/>
</dbReference>
<dbReference type="HAMAP" id="MF_00019">
    <property type="entry name" value="PlsX"/>
    <property type="match status" value="1"/>
</dbReference>
<dbReference type="InterPro" id="IPR003664">
    <property type="entry name" value="FA_synthesis"/>
</dbReference>
<dbReference type="InterPro" id="IPR012281">
    <property type="entry name" value="Phospholipid_synth_PlsX-like"/>
</dbReference>
<dbReference type="NCBIfam" id="TIGR00182">
    <property type="entry name" value="plsX"/>
    <property type="match status" value="1"/>
</dbReference>
<dbReference type="PANTHER" id="PTHR30100">
    <property type="entry name" value="FATTY ACID/PHOSPHOLIPID SYNTHESIS PROTEIN PLSX"/>
    <property type="match status" value="1"/>
</dbReference>
<dbReference type="PANTHER" id="PTHR30100:SF1">
    <property type="entry name" value="PHOSPHATE ACYLTRANSFERASE"/>
    <property type="match status" value="1"/>
</dbReference>
<dbReference type="Pfam" id="PF02504">
    <property type="entry name" value="FA_synthesis"/>
    <property type="match status" value="1"/>
</dbReference>
<dbReference type="PIRSF" id="PIRSF002465">
    <property type="entry name" value="Phsphlp_syn_PlsX"/>
    <property type="match status" value="1"/>
</dbReference>
<dbReference type="SUPFAM" id="SSF53659">
    <property type="entry name" value="Isocitrate/Isopropylmalate dehydrogenase-like"/>
    <property type="match status" value="1"/>
</dbReference>
<protein>
    <recommendedName>
        <fullName evidence="1">Phosphate acyltransferase</fullName>
        <ecNumber evidence="1">2.3.1.274</ecNumber>
    </recommendedName>
    <alternativeName>
        <fullName evidence="1">Acyl-ACP phosphotransacylase</fullName>
    </alternativeName>
    <alternativeName>
        <fullName evidence="1">Acyl-[acyl-carrier-protein]--phosphate acyltransferase</fullName>
    </alternativeName>
    <alternativeName>
        <fullName evidence="1">Phosphate-acyl-ACP acyltransferase</fullName>
    </alternativeName>
</protein>
<name>PLSX_PICP2</name>
<organism>
    <name type="scientific">Picosynechococcus sp. (strain ATCC 27264 / PCC 7002 / PR-6)</name>
    <name type="common">Agmenellum quadruplicatum</name>
    <dbReference type="NCBI Taxonomy" id="32049"/>
    <lineage>
        <taxon>Bacteria</taxon>
        <taxon>Bacillati</taxon>
        <taxon>Cyanobacteriota</taxon>
        <taxon>Cyanophyceae</taxon>
        <taxon>Oscillatoriophycideae</taxon>
        <taxon>Chroococcales</taxon>
        <taxon>Geminocystaceae</taxon>
        <taxon>Picosynechococcus</taxon>
    </lineage>
</organism>
<accession>B1XPH6</accession>
<reference key="1">
    <citation type="submission" date="2008-02" db="EMBL/GenBank/DDBJ databases">
        <title>Complete sequence of Synechococcus sp. PCC 7002.</title>
        <authorList>
            <person name="Li T."/>
            <person name="Zhao J."/>
            <person name="Zhao C."/>
            <person name="Liu Z."/>
            <person name="Zhao F."/>
            <person name="Marquardt J."/>
            <person name="Nomura C.T."/>
            <person name="Persson S."/>
            <person name="Detter J.C."/>
            <person name="Richardson P.M."/>
            <person name="Lanz C."/>
            <person name="Schuster S.C."/>
            <person name="Wang J."/>
            <person name="Li S."/>
            <person name="Huang X."/>
            <person name="Cai T."/>
            <person name="Yu Z."/>
            <person name="Luo J."/>
            <person name="Zhao J."/>
            <person name="Bryant D.A."/>
        </authorList>
    </citation>
    <scope>NUCLEOTIDE SEQUENCE [LARGE SCALE GENOMIC DNA]</scope>
    <source>
        <strain>ATCC 27264 / PCC 7002 / PR-6</strain>
    </source>
</reference>
<feature type="chain" id="PRO_1000116383" description="Phosphate acyltransferase">
    <location>
        <begin position="1"/>
        <end position="365"/>
    </location>
</feature>
<keyword id="KW-0963">Cytoplasm</keyword>
<keyword id="KW-0444">Lipid biosynthesis</keyword>
<keyword id="KW-0443">Lipid metabolism</keyword>
<keyword id="KW-0594">Phospholipid biosynthesis</keyword>
<keyword id="KW-1208">Phospholipid metabolism</keyword>
<keyword id="KW-1185">Reference proteome</keyword>
<keyword id="KW-0808">Transferase</keyword>
<comment type="function">
    <text evidence="1">Catalyzes the reversible formation of acyl-phosphate (acyl-PO(4)) from acyl-[acyl-carrier-protein] (acyl-ACP). This enzyme utilizes acyl-ACP as fatty acyl donor, but not acyl-CoA.</text>
</comment>
<comment type="catalytic activity">
    <reaction evidence="1">
        <text>a fatty acyl-[ACP] + phosphate = an acyl phosphate + holo-[ACP]</text>
        <dbReference type="Rhea" id="RHEA:42292"/>
        <dbReference type="Rhea" id="RHEA-COMP:9685"/>
        <dbReference type="Rhea" id="RHEA-COMP:14125"/>
        <dbReference type="ChEBI" id="CHEBI:43474"/>
        <dbReference type="ChEBI" id="CHEBI:59918"/>
        <dbReference type="ChEBI" id="CHEBI:64479"/>
        <dbReference type="ChEBI" id="CHEBI:138651"/>
        <dbReference type="EC" id="2.3.1.274"/>
    </reaction>
</comment>
<comment type="pathway">
    <text evidence="1">Lipid metabolism; phospholipid metabolism.</text>
</comment>
<comment type="subunit">
    <text evidence="1">Homodimer. Probably interacts with PlsY.</text>
</comment>
<comment type="subcellular location">
    <subcellularLocation>
        <location evidence="1">Cytoplasm</location>
    </subcellularLocation>
    <text evidence="1">Associated with the membrane possibly through PlsY.</text>
</comment>
<comment type="similarity">
    <text evidence="1">Belongs to the PlsX family.</text>
</comment>
<sequence>MSSTRAKIAVDAMGGDYAPDEIVAGAIRAVEELNVEVFLVGDPVRIQKYLDEHSSPANQFLHVVEAEGVVEMCEEPLVAIRRKPKASINLSMQLVRKKQADAVVSAGHSGAAMAAALLKLGRIKGIDRPAIGAVFPTLDPERSVIVLDVGANVDSRPKYLEQFALMGTIYSKYVLGNKEPQVGLLNIGEEPSKGNELALKTHELLSSNPAIPFKGNAEGRDVLSGEFDVVVCDGFTGNILLKFAESVGAVLLQILKEELPRGLRGKLGAAVLTPNLKRIKQRIDHAEHGGALLFGVAGVCIISHGSSKAPSIFNAIRLAKEAIDNQVIQRIQNYTEEHQALLEQQTNSTTTLSEVASSAMIEKSE</sequence>
<evidence type="ECO:0000255" key="1">
    <source>
        <dbReference type="HAMAP-Rule" id="MF_00019"/>
    </source>
</evidence>
<proteinExistence type="inferred from homology"/>